<sequence>MSVTIEDIIKDLELEVINKGKNVNEINVSDINRPGLQFSGFYNYYANERVQIVGKAEWSFLDAMQPDLRKKRLEKYFEFDNPGTIVTRGLIPHKEFLESAIKNKRWILRTNNISTRFINRLMNYLDVKLAPETRLHGVLMDVYGIGILITGESGIGKSETALELIKRGHRLVADDAVDVKQIDGVLNGTSPYITSGMIEVRGMGIIDISALYGLSSVLKTKNIGLVICLEQWKKDENYDRLGIDKEYMDILNVPVRKLKIPIRPGRNLAVIIEAAAANYRYSLVSDVTPVDVISERIQELRKEDGGDE</sequence>
<organism>
    <name type="scientific">Clostridium kluyveri (strain NBRC 12016)</name>
    <dbReference type="NCBI Taxonomy" id="583346"/>
    <lineage>
        <taxon>Bacteria</taxon>
        <taxon>Bacillati</taxon>
        <taxon>Bacillota</taxon>
        <taxon>Clostridia</taxon>
        <taxon>Eubacteriales</taxon>
        <taxon>Clostridiaceae</taxon>
        <taxon>Clostridium</taxon>
    </lineage>
</organism>
<reference key="1">
    <citation type="submission" date="2005-09" db="EMBL/GenBank/DDBJ databases">
        <title>Complete genome sequence of Clostridium kluyveri and comparative genomics of Clostridia species.</title>
        <authorList>
            <person name="Inui M."/>
            <person name="Nonaka H."/>
            <person name="Shinoda Y."/>
            <person name="Ikenaga Y."/>
            <person name="Abe M."/>
            <person name="Naito K."/>
            <person name="Vertes A.A."/>
            <person name="Yukawa H."/>
        </authorList>
    </citation>
    <scope>NUCLEOTIDE SEQUENCE [LARGE SCALE GENOMIC DNA]</scope>
    <source>
        <strain>NBRC 12016</strain>
    </source>
</reference>
<feature type="chain" id="PRO_1000165070" description="HPr kinase/phosphorylase">
    <location>
        <begin position="1"/>
        <end position="308"/>
    </location>
</feature>
<feature type="region of interest" description="Important for the catalytic mechanism of both phosphorylation and dephosphorylation" evidence="1">
    <location>
        <begin position="198"/>
        <end position="207"/>
    </location>
</feature>
<feature type="region of interest" description="Important for the catalytic mechanism of dephosphorylation" evidence="1">
    <location>
        <begin position="261"/>
        <end position="266"/>
    </location>
</feature>
<feature type="active site" evidence="1">
    <location>
        <position position="136"/>
    </location>
</feature>
<feature type="active site" evidence="1">
    <location>
        <position position="157"/>
    </location>
</feature>
<feature type="active site" description="Proton acceptor; for phosphorylation activity. Proton donor; for dephosphorylation activity" evidence="1">
    <location>
        <position position="175"/>
    </location>
</feature>
<feature type="active site" evidence="1">
    <location>
        <position position="240"/>
    </location>
</feature>
<feature type="binding site" evidence="1">
    <location>
        <begin position="151"/>
        <end position="158"/>
    </location>
    <ligand>
        <name>ATP</name>
        <dbReference type="ChEBI" id="CHEBI:30616"/>
    </ligand>
</feature>
<feature type="binding site" evidence="1">
    <location>
        <position position="158"/>
    </location>
    <ligand>
        <name>Mg(2+)</name>
        <dbReference type="ChEBI" id="CHEBI:18420"/>
    </ligand>
</feature>
<feature type="binding site" evidence="1">
    <location>
        <position position="199"/>
    </location>
    <ligand>
        <name>Mg(2+)</name>
        <dbReference type="ChEBI" id="CHEBI:18420"/>
    </ligand>
</feature>
<comment type="function">
    <text evidence="1">Catalyzes the ATP- as well as the pyrophosphate-dependent phosphorylation of a specific serine residue in HPr, a phosphocarrier protein of the phosphoenolpyruvate-dependent sugar phosphotransferase system (PTS). HprK/P also catalyzes the pyrophosphate-producing, inorganic phosphate-dependent dephosphorylation (phosphorolysis) of seryl-phosphorylated HPr (P-Ser-HPr). The two antagonistic activities of HprK/P are regulated by several intracellular metabolites, which change their concentration in response to the absence or presence of rapidly metabolisable carbon sources (glucose, fructose, etc.) in the growth medium. Therefore, by controlling the phosphorylation state of HPr, HPrK/P is a sensor enzyme that plays a major role in the regulation of carbon metabolism and sugar transport: it mediates carbon catabolite repression (CCR), and regulates PTS-catalyzed carbohydrate uptake and inducer exclusion.</text>
</comment>
<comment type="catalytic activity">
    <reaction evidence="1">
        <text>[HPr protein]-L-serine + ATP = [HPr protein]-O-phospho-L-serine + ADP + H(+)</text>
        <dbReference type="Rhea" id="RHEA:46600"/>
        <dbReference type="Rhea" id="RHEA-COMP:11602"/>
        <dbReference type="Rhea" id="RHEA-COMP:11603"/>
        <dbReference type="ChEBI" id="CHEBI:15378"/>
        <dbReference type="ChEBI" id="CHEBI:29999"/>
        <dbReference type="ChEBI" id="CHEBI:30616"/>
        <dbReference type="ChEBI" id="CHEBI:83421"/>
        <dbReference type="ChEBI" id="CHEBI:456216"/>
    </reaction>
</comment>
<comment type="catalytic activity">
    <reaction evidence="1">
        <text>[HPr protein]-O-phospho-L-serine + phosphate + H(+) = [HPr protein]-L-serine + diphosphate</text>
        <dbReference type="Rhea" id="RHEA:46604"/>
        <dbReference type="Rhea" id="RHEA-COMP:11602"/>
        <dbReference type="Rhea" id="RHEA-COMP:11603"/>
        <dbReference type="ChEBI" id="CHEBI:15378"/>
        <dbReference type="ChEBI" id="CHEBI:29999"/>
        <dbReference type="ChEBI" id="CHEBI:33019"/>
        <dbReference type="ChEBI" id="CHEBI:43474"/>
        <dbReference type="ChEBI" id="CHEBI:83421"/>
    </reaction>
</comment>
<comment type="cofactor">
    <cofactor evidence="1">
        <name>Mg(2+)</name>
        <dbReference type="ChEBI" id="CHEBI:18420"/>
    </cofactor>
</comment>
<comment type="subunit">
    <text evidence="1">Homohexamer.</text>
</comment>
<comment type="domain">
    <text evidence="1">The Walker A ATP-binding motif also binds Pi and PPi.</text>
</comment>
<comment type="miscellaneous">
    <text evidence="1">Both phosphorylation and phosphorolysis are carried out by the same active site and suggest a common mechanism for both reactions.</text>
</comment>
<comment type="similarity">
    <text evidence="1">Belongs to the HPrK/P family.</text>
</comment>
<accession>B9E1Q9</accession>
<dbReference type="EC" id="2.7.11.-" evidence="1"/>
<dbReference type="EC" id="2.7.4.-" evidence="1"/>
<dbReference type="EMBL" id="AP009049">
    <property type="protein sequence ID" value="BAH06434.1"/>
    <property type="molecule type" value="Genomic_DNA"/>
</dbReference>
<dbReference type="RefSeq" id="WP_012101881.1">
    <property type="nucleotide sequence ID" value="NC_011837.1"/>
</dbReference>
<dbReference type="SMR" id="B9E1Q9"/>
<dbReference type="KEGG" id="ckr:CKR_1383"/>
<dbReference type="HOGENOM" id="CLU_052030_0_1_9"/>
<dbReference type="Proteomes" id="UP000007969">
    <property type="component" value="Chromosome"/>
</dbReference>
<dbReference type="GO" id="GO:0005524">
    <property type="term" value="F:ATP binding"/>
    <property type="evidence" value="ECO:0007669"/>
    <property type="project" value="UniProtKB-UniRule"/>
</dbReference>
<dbReference type="GO" id="GO:0000287">
    <property type="term" value="F:magnesium ion binding"/>
    <property type="evidence" value="ECO:0007669"/>
    <property type="project" value="UniProtKB-UniRule"/>
</dbReference>
<dbReference type="GO" id="GO:0000155">
    <property type="term" value="F:phosphorelay sensor kinase activity"/>
    <property type="evidence" value="ECO:0007669"/>
    <property type="project" value="InterPro"/>
</dbReference>
<dbReference type="GO" id="GO:0004674">
    <property type="term" value="F:protein serine/threonine kinase activity"/>
    <property type="evidence" value="ECO:0007669"/>
    <property type="project" value="UniProtKB-KW"/>
</dbReference>
<dbReference type="GO" id="GO:0004712">
    <property type="term" value="F:protein serine/threonine/tyrosine kinase activity"/>
    <property type="evidence" value="ECO:0007669"/>
    <property type="project" value="UniProtKB-UniRule"/>
</dbReference>
<dbReference type="GO" id="GO:0006109">
    <property type="term" value="P:regulation of carbohydrate metabolic process"/>
    <property type="evidence" value="ECO:0007669"/>
    <property type="project" value="UniProtKB-UniRule"/>
</dbReference>
<dbReference type="CDD" id="cd01918">
    <property type="entry name" value="HprK_C"/>
    <property type="match status" value="1"/>
</dbReference>
<dbReference type="FunFam" id="3.40.50.300:FF:000174">
    <property type="entry name" value="HPr kinase/phosphorylase"/>
    <property type="match status" value="1"/>
</dbReference>
<dbReference type="Gene3D" id="3.40.1390.20">
    <property type="entry name" value="HprK N-terminal domain-like"/>
    <property type="match status" value="1"/>
</dbReference>
<dbReference type="Gene3D" id="3.40.50.300">
    <property type="entry name" value="P-loop containing nucleotide triphosphate hydrolases"/>
    <property type="match status" value="1"/>
</dbReference>
<dbReference type="HAMAP" id="MF_01249">
    <property type="entry name" value="HPr_kinase"/>
    <property type="match status" value="1"/>
</dbReference>
<dbReference type="InterPro" id="IPR003755">
    <property type="entry name" value="HPr(Ser)_kin/Pase"/>
</dbReference>
<dbReference type="InterPro" id="IPR011104">
    <property type="entry name" value="Hpr_kin/Pase_C"/>
</dbReference>
<dbReference type="InterPro" id="IPR011126">
    <property type="entry name" value="Hpr_kin/Pase_Hpr_N"/>
</dbReference>
<dbReference type="InterPro" id="IPR027417">
    <property type="entry name" value="P-loop_NTPase"/>
</dbReference>
<dbReference type="InterPro" id="IPR028979">
    <property type="entry name" value="Ser_kin/Pase_Hpr-like_N_sf"/>
</dbReference>
<dbReference type="NCBIfam" id="TIGR00679">
    <property type="entry name" value="hpr-ser"/>
    <property type="match status" value="1"/>
</dbReference>
<dbReference type="PANTHER" id="PTHR30305:SF1">
    <property type="entry name" value="HPR KINASE_PHOSPHORYLASE"/>
    <property type="match status" value="1"/>
</dbReference>
<dbReference type="PANTHER" id="PTHR30305">
    <property type="entry name" value="PROTEIN YJDM-RELATED"/>
    <property type="match status" value="1"/>
</dbReference>
<dbReference type="Pfam" id="PF07475">
    <property type="entry name" value="Hpr_kinase_C"/>
    <property type="match status" value="1"/>
</dbReference>
<dbReference type="Pfam" id="PF02603">
    <property type="entry name" value="Hpr_kinase_N"/>
    <property type="match status" value="1"/>
</dbReference>
<dbReference type="SUPFAM" id="SSF75138">
    <property type="entry name" value="HprK N-terminal domain-like"/>
    <property type="match status" value="1"/>
</dbReference>
<dbReference type="SUPFAM" id="SSF53795">
    <property type="entry name" value="PEP carboxykinase-like"/>
    <property type="match status" value="1"/>
</dbReference>
<evidence type="ECO:0000255" key="1">
    <source>
        <dbReference type="HAMAP-Rule" id="MF_01249"/>
    </source>
</evidence>
<keyword id="KW-0067">ATP-binding</keyword>
<keyword id="KW-0119">Carbohydrate metabolism</keyword>
<keyword id="KW-0418">Kinase</keyword>
<keyword id="KW-0460">Magnesium</keyword>
<keyword id="KW-0479">Metal-binding</keyword>
<keyword id="KW-0511">Multifunctional enzyme</keyword>
<keyword id="KW-0547">Nucleotide-binding</keyword>
<keyword id="KW-0723">Serine/threonine-protein kinase</keyword>
<keyword id="KW-0808">Transferase</keyword>
<name>HPRK_CLOK1</name>
<gene>
    <name evidence="1" type="primary">hprK</name>
    <name type="ordered locus">CKR_1383</name>
</gene>
<protein>
    <recommendedName>
        <fullName evidence="1">HPr kinase/phosphorylase</fullName>
        <shortName evidence="1">HPrK/P</shortName>
        <ecNumber evidence="1">2.7.11.-</ecNumber>
        <ecNumber evidence="1">2.7.4.-</ecNumber>
    </recommendedName>
    <alternativeName>
        <fullName evidence="1">HPr(Ser) kinase/phosphorylase</fullName>
    </alternativeName>
</protein>
<proteinExistence type="inferred from homology"/>